<name>SEPT7_RAT</name>
<reference key="1">
    <citation type="journal article" date="1998" name="Abstr. - Soc. Neurosci.">
        <title>Identification of postsynaptic density proteins by MALDI-TOF mass spectrometry (Abstract #713.1).</title>
        <authorList>
            <person name="Walikonis R.S."/>
            <person name="Jensen O."/>
            <person name="Mann M."/>
            <person name="Kennedy M.B."/>
        </authorList>
    </citation>
    <scope>NUCLEOTIDE SEQUENCE [MRNA]</scope>
    <source>
        <strain>Sprague-Dawley</strain>
    </source>
</reference>
<reference key="2">
    <citation type="submission" date="2007-07" db="UniProtKB">
        <authorList>
            <person name="Lubec G."/>
            <person name="Kang S.U."/>
        </authorList>
    </citation>
    <scope>PROTEIN SEQUENCE OF 137-146 AND 186-194</scope>
    <scope>IDENTIFICATION BY MASS SPECTROMETRY</scope>
    <source>
        <strain>Sprague-Dawley</strain>
        <tissue>Brain</tissue>
    </source>
</reference>
<reference key="3">
    <citation type="journal article" date="2004" name="J. Biol. Chem.">
        <title>Biochemical and cell biological analyses of a mammalian septin complex, Sept7/9b/11.</title>
        <authorList>
            <person name="Nagata K."/>
            <person name="Asano T."/>
            <person name="Nozawa Y."/>
            <person name="Inagaki M."/>
        </authorList>
    </citation>
    <scope>SUBCELLULAR LOCATION</scope>
    <scope>INTERACTION WITH SEPTIN2; SEPTIN7; SEPTIN8; SEPTIN9 AND SEPTIN11</scope>
</reference>
<reference key="4">
    <citation type="journal article" date="2012" name="Nat. Commun.">
        <title>Quantitative maps of protein phosphorylation sites across 14 different rat organs and tissues.</title>
        <authorList>
            <person name="Lundby A."/>
            <person name="Secher A."/>
            <person name="Lage K."/>
            <person name="Nordsborg N.B."/>
            <person name="Dmytriyev A."/>
            <person name="Lundby C."/>
            <person name="Olsen J.V."/>
        </authorList>
    </citation>
    <scope>PHOSPHORYLATION [LARGE SCALE ANALYSIS] AT SER-76; THR-227 AND SER-333</scope>
    <scope>IDENTIFICATION BY MASS SPECTROMETRY [LARGE SCALE ANALYSIS]</scope>
</reference>
<comment type="function">
    <text evidence="1 3">Filament-forming cytoskeletal GTPase. Required for normal organization of the actin cytoskeleton. Required for normal progress through mitosis. Involved in cytokinesis. Required for normal association of CENPE with the kinetochore. Plays a role in ciliogenesis and collective cell movements. Forms a filamentous structure with SEPTIN12, SEPTIN6, SEPTIN2 and probably SEPTIN4 at the sperm annulus which is required for the structural integrity and motility of the sperm tail during postmeiotic differentiation (By similarity).</text>
</comment>
<comment type="subunit">
    <text evidence="1 3 7">Septins polymerize into heterooligomeric protein complexes that form filaments, and associate with cellular membranes, actin filaments and microtubules. GTPase activity is required for filament formation. Filaments are assembled from asymmetrical heterotrimers, composed of SEPTIN2, SEPTIN6 and SEPTIN7 that associate head-to-head to form a hexameric unit. Within the trimer, directly interacts with SEPTIN6, while interaction with SEPTIN2 seems indirect. In the absence of SEPTIN6, forms homodimers. Interacts directly with CENPE and links CENPE to septin filaments composed of SEPTIN2, SEPTIN6 and SEPTIN7. Interacts with SEPTIN5. Component of a septin core octameric complex consisting of SEPTIN12, SEPTIN7, SEPTIN6 and SEPTIN2 or SEPTIN4 in the order 12-7-6-2-2-6-7-12 or 12-7-6-4-4-6-7-12 and located in the sperm annulus; the SEPTIN12:SEPTIN7 association is mediated by the respective GTP-binding domains (By similarity). Interacts with SEPTIN2, SEPTIN7, SEPTIN8, SEPTIN9 and SEPTIN11 (PubMed:15485874).</text>
</comment>
<comment type="subcellular location">
    <subcellularLocation>
        <location evidence="7">Cytoplasm</location>
    </subcellularLocation>
    <subcellularLocation>
        <location evidence="1">Chromosome</location>
        <location evidence="1">Centromere</location>
        <location evidence="1">Kinetochore</location>
    </subcellularLocation>
    <subcellularLocation>
        <location evidence="1">Cytoplasm</location>
        <location evidence="1">Cytoskeleton</location>
        <location evidence="1">Spindle</location>
    </subcellularLocation>
    <subcellularLocation>
        <location evidence="1">Cleavage furrow</location>
    </subcellularLocation>
    <subcellularLocation>
        <location evidence="1">Midbody</location>
    </subcellularLocation>
    <subcellularLocation>
        <location evidence="1">Cytoplasm</location>
        <location evidence="1">Cytoskeleton</location>
        <location evidence="1">Cilium axoneme</location>
    </subcellularLocation>
    <subcellularLocation>
        <location evidence="3">Cell projection</location>
        <location evidence="3">Cilium</location>
        <location evidence="3">Flagellum</location>
    </subcellularLocation>
    <text evidence="1 3">Distributed throughout the cytoplasm in prometaphase cells. Associated with the spindle during metaphase. Associated with the central spindle and at the cleavage furrow in anaphase cells. Detected at the midbody in telophase (By similarity). Associated with actin stress fibers. According to PubMed:15485874, also found in the nucleus. Found in the sperm annulus (By similarity).</text>
</comment>
<comment type="miscellaneous">
    <text evidence="1">Coordinated expression with SEPTIN2 and SEPTIN6.</text>
</comment>
<comment type="similarity">
    <text evidence="5">Belongs to the TRAFAC class TrmE-Era-EngA-EngB-Septin-like GTPase superfamily. Septin GTPase family.</text>
</comment>
<keyword id="KW-0007">Acetylation</keyword>
<keyword id="KW-0131">Cell cycle</keyword>
<keyword id="KW-0132">Cell division</keyword>
<keyword id="KW-0966">Cell projection</keyword>
<keyword id="KW-0137">Centromere</keyword>
<keyword id="KW-0158">Chromosome</keyword>
<keyword id="KW-0969">Cilium</keyword>
<keyword id="KW-0175">Coiled coil</keyword>
<keyword id="KW-0963">Cytoplasm</keyword>
<keyword id="KW-0206">Cytoskeleton</keyword>
<keyword id="KW-0221">Differentiation</keyword>
<keyword id="KW-0903">Direct protein sequencing</keyword>
<keyword id="KW-0282">Flagellum</keyword>
<keyword id="KW-0342">GTP-binding</keyword>
<keyword id="KW-0995">Kinetochore</keyword>
<keyword id="KW-0498">Mitosis</keyword>
<keyword id="KW-0547">Nucleotide-binding</keyword>
<keyword id="KW-0597">Phosphoprotein</keyword>
<keyword id="KW-1185">Reference proteome</keyword>
<keyword id="KW-0744">Spermatogenesis</keyword>
<evidence type="ECO:0000250" key="1"/>
<evidence type="ECO:0000250" key="2">
    <source>
        <dbReference type="UniProtKB" id="O55131"/>
    </source>
</evidence>
<evidence type="ECO:0000250" key="3">
    <source>
        <dbReference type="UniProtKB" id="Q16181"/>
    </source>
</evidence>
<evidence type="ECO:0000255" key="4"/>
<evidence type="ECO:0000255" key="5">
    <source>
        <dbReference type="PROSITE-ProRule" id="PRU01056"/>
    </source>
</evidence>
<evidence type="ECO:0000256" key="6">
    <source>
        <dbReference type="SAM" id="MobiDB-lite"/>
    </source>
</evidence>
<evidence type="ECO:0000269" key="7">
    <source>
    </source>
</evidence>
<evidence type="ECO:0000312" key="8">
    <source>
        <dbReference type="RGD" id="620469"/>
    </source>
</evidence>
<evidence type="ECO:0007744" key="9">
    <source>
    </source>
</evidence>
<dbReference type="EMBL" id="AF142759">
    <property type="protein sequence ID" value="AAD37861.1"/>
    <property type="molecule type" value="mRNA"/>
</dbReference>
<dbReference type="RefSeq" id="NP_072138.2">
    <property type="nucleotide sequence ID" value="NM_022616.2"/>
</dbReference>
<dbReference type="SMR" id="Q9WVC0"/>
<dbReference type="BioGRID" id="249132">
    <property type="interactions" value="5"/>
</dbReference>
<dbReference type="CORUM" id="Q9WVC0"/>
<dbReference type="FunCoup" id="Q9WVC0">
    <property type="interactions" value="2755"/>
</dbReference>
<dbReference type="IntAct" id="Q9WVC0">
    <property type="interactions" value="6"/>
</dbReference>
<dbReference type="MINT" id="Q9WVC0"/>
<dbReference type="STRING" id="10116.ENSRNOP00000059464"/>
<dbReference type="GlyGen" id="Q9WVC0">
    <property type="glycosylation" value="1 site, 1 O-linked glycan (1 site)"/>
</dbReference>
<dbReference type="iPTMnet" id="Q9WVC0"/>
<dbReference type="PhosphoSitePlus" id="Q9WVC0"/>
<dbReference type="SwissPalm" id="Q9WVC0"/>
<dbReference type="jPOST" id="Q9WVC0"/>
<dbReference type="PaxDb" id="10116-ENSRNOP00000008839"/>
<dbReference type="GeneID" id="64551"/>
<dbReference type="KEGG" id="rno:64551"/>
<dbReference type="UCSC" id="RGD:620469">
    <property type="organism name" value="rat"/>
</dbReference>
<dbReference type="AGR" id="RGD:620469"/>
<dbReference type="CTD" id="989"/>
<dbReference type="RGD" id="620469">
    <property type="gene designation" value="Septin7"/>
</dbReference>
<dbReference type="eggNOG" id="KOG2655">
    <property type="taxonomic scope" value="Eukaryota"/>
</dbReference>
<dbReference type="InParanoid" id="Q9WVC0"/>
<dbReference type="OrthoDB" id="416553at2759"/>
<dbReference type="PhylomeDB" id="Q9WVC0"/>
<dbReference type="Reactome" id="R-RNO-5687128">
    <property type="pathway name" value="MAPK6/MAPK4 signaling"/>
</dbReference>
<dbReference type="PRO" id="PR:Q9WVC0"/>
<dbReference type="Proteomes" id="UP000002494">
    <property type="component" value="Unplaced"/>
</dbReference>
<dbReference type="GO" id="GO:0043679">
    <property type="term" value="C:axon terminus"/>
    <property type="evidence" value="ECO:0000266"/>
    <property type="project" value="RGD"/>
</dbReference>
<dbReference type="GO" id="GO:0005930">
    <property type="term" value="C:axoneme"/>
    <property type="evidence" value="ECO:0000250"/>
    <property type="project" value="UniProtKB"/>
</dbReference>
<dbReference type="GO" id="GO:0005938">
    <property type="term" value="C:cell cortex"/>
    <property type="evidence" value="ECO:0000266"/>
    <property type="project" value="RGD"/>
</dbReference>
<dbReference type="GO" id="GO:0032153">
    <property type="term" value="C:cell division site"/>
    <property type="evidence" value="ECO:0000318"/>
    <property type="project" value="GO_Central"/>
</dbReference>
<dbReference type="GO" id="GO:0032154">
    <property type="term" value="C:cleavage furrow"/>
    <property type="evidence" value="ECO:0007669"/>
    <property type="project" value="UniProtKB-SubCell"/>
</dbReference>
<dbReference type="GO" id="GO:0005737">
    <property type="term" value="C:cytoplasm"/>
    <property type="evidence" value="ECO:0000266"/>
    <property type="project" value="RGD"/>
</dbReference>
<dbReference type="GO" id="GO:0098978">
    <property type="term" value="C:glutamatergic synapse"/>
    <property type="evidence" value="ECO:0000314"/>
    <property type="project" value="SynGO"/>
</dbReference>
<dbReference type="GO" id="GO:0000776">
    <property type="term" value="C:kinetochore"/>
    <property type="evidence" value="ECO:0007669"/>
    <property type="project" value="UniProtKB-KW"/>
</dbReference>
<dbReference type="GO" id="GO:0016020">
    <property type="term" value="C:membrane"/>
    <property type="evidence" value="ECO:0000266"/>
    <property type="project" value="RGD"/>
</dbReference>
<dbReference type="GO" id="GO:0015630">
    <property type="term" value="C:microtubule cytoskeleton"/>
    <property type="evidence" value="ECO:0000318"/>
    <property type="project" value="GO_Central"/>
</dbReference>
<dbReference type="GO" id="GO:0030496">
    <property type="term" value="C:midbody"/>
    <property type="evidence" value="ECO:0007669"/>
    <property type="project" value="UniProtKB-SubCell"/>
</dbReference>
<dbReference type="GO" id="GO:0043005">
    <property type="term" value="C:neuron projection"/>
    <property type="evidence" value="ECO:0000266"/>
    <property type="project" value="RGD"/>
</dbReference>
<dbReference type="GO" id="GO:0043025">
    <property type="term" value="C:neuronal cell body"/>
    <property type="evidence" value="ECO:0000266"/>
    <property type="project" value="RGD"/>
</dbReference>
<dbReference type="GO" id="GO:0097730">
    <property type="term" value="C:non-motile cilium"/>
    <property type="evidence" value="ECO:0000266"/>
    <property type="project" value="RGD"/>
</dbReference>
<dbReference type="GO" id="GO:0005634">
    <property type="term" value="C:nucleus"/>
    <property type="evidence" value="ECO:0000266"/>
    <property type="project" value="RGD"/>
</dbReference>
<dbReference type="GO" id="GO:0005886">
    <property type="term" value="C:plasma membrane"/>
    <property type="evidence" value="ECO:0000266"/>
    <property type="project" value="RGD"/>
</dbReference>
<dbReference type="GO" id="GO:0150050">
    <property type="term" value="C:postsynaptic septin cytoskeleton"/>
    <property type="evidence" value="ECO:0000314"/>
    <property type="project" value="SynGO"/>
</dbReference>
<dbReference type="GO" id="GO:0042734">
    <property type="term" value="C:presynaptic membrane"/>
    <property type="evidence" value="ECO:0000266"/>
    <property type="project" value="RGD"/>
</dbReference>
<dbReference type="GO" id="GO:0032991">
    <property type="term" value="C:protein-containing complex"/>
    <property type="evidence" value="ECO:0000266"/>
    <property type="project" value="RGD"/>
</dbReference>
<dbReference type="GO" id="GO:0031105">
    <property type="term" value="C:septin complex"/>
    <property type="evidence" value="ECO:0000250"/>
    <property type="project" value="UniProtKB"/>
</dbReference>
<dbReference type="GO" id="GO:0032156">
    <property type="term" value="C:septin cytoskeleton"/>
    <property type="evidence" value="ECO:0000266"/>
    <property type="project" value="RGD"/>
</dbReference>
<dbReference type="GO" id="GO:0032160">
    <property type="term" value="C:septin filament array"/>
    <property type="evidence" value="ECO:0000266"/>
    <property type="project" value="RGD"/>
</dbReference>
<dbReference type="GO" id="GO:0005940">
    <property type="term" value="C:septin ring"/>
    <property type="evidence" value="ECO:0000266"/>
    <property type="project" value="RGD"/>
</dbReference>
<dbReference type="GO" id="GO:0097227">
    <property type="term" value="C:sperm annulus"/>
    <property type="evidence" value="ECO:0000266"/>
    <property type="project" value="RGD"/>
</dbReference>
<dbReference type="GO" id="GO:0005819">
    <property type="term" value="C:spindle"/>
    <property type="evidence" value="ECO:0007669"/>
    <property type="project" value="UniProtKB-SubCell"/>
</dbReference>
<dbReference type="GO" id="GO:0001725">
    <property type="term" value="C:stress fiber"/>
    <property type="evidence" value="ECO:0000266"/>
    <property type="project" value="RGD"/>
</dbReference>
<dbReference type="GO" id="GO:0045202">
    <property type="term" value="C:synapse"/>
    <property type="evidence" value="ECO:0000266"/>
    <property type="project" value="RGD"/>
</dbReference>
<dbReference type="GO" id="GO:0031982">
    <property type="term" value="C:vesicle"/>
    <property type="evidence" value="ECO:0000266"/>
    <property type="project" value="RGD"/>
</dbReference>
<dbReference type="GO" id="GO:0005525">
    <property type="term" value="F:GTP binding"/>
    <property type="evidence" value="ECO:0007669"/>
    <property type="project" value="UniProtKB-KW"/>
</dbReference>
<dbReference type="GO" id="GO:0003924">
    <property type="term" value="F:GTPase activity"/>
    <property type="evidence" value="ECO:0000318"/>
    <property type="project" value="GO_Central"/>
</dbReference>
<dbReference type="GO" id="GO:0042802">
    <property type="term" value="F:identical protein binding"/>
    <property type="evidence" value="ECO:0000266"/>
    <property type="project" value="RGD"/>
</dbReference>
<dbReference type="GO" id="GO:0060090">
    <property type="term" value="F:molecular adaptor activity"/>
    <property type="evidence" value="ECO:0000318"/>
    <property type="project" value="GO_Central"/>
</dbReference>
<dbReference type="GO" id="GO:0099186">
    <property type="term" value="F:structural constituent of postsynapse"/>
    <property type="evidence" value="ECO:0000314"/>
    <property type="project" value="SynGO"/>
</dbReference>
<dbReference type="GO" id="GO:0060271">
    <property type="term" value="P:cilium assembly"/>
    <property type="evidence" value="ECO:0000250"/>
    <property type="project" value="UniProtKB"/>
</dbReference>
<dbReference type="GO" id="GO:0048668">
    <property type="term" value="P:collateral sprouting"/>
    <property type="evidence" value="ECO:0000266"/>
    <property type="project" value="RGD"/>
</dbReference>
<dbReference type="GO" id="GO:0030865">
    <property type="term" value="P:cortical cytoskeleton organization"/>
    <property type="evidence" value="ECO:0000266"/>
    <property type="project" value="RGD"/>
</dbReference>
<dbReference type="GO" id="GO:0061640">
    <property type="term" value="P:cytoskeleton-dependent cytokinesis"/>
    <property type="evidence" value="ECO:0000318"/>
    <property type="project" value="GO_Central"/>
</dbReference>
<dbReference type="GO" id="GO:0046323">
    <property type="term" value="P:D-glucose import"/>
    <property type="evidence" value="ECO:0000266"/>
    <property type="project" value="RGD"/>
</dbReference>
<dbReference type="GO" id="GO:0060997">
    <property type="term" value="P:dendritic spine morphogenesis"/>
    <property type="evidence" value="ECO:0000266"/>
    <property type="project" value="RGD"/>
</dbReference>
<dbReference type="GO" id="GO:0000281">
    <property type="term" value="P:mitotic cytokinesis"/>
    <property type="evidence" value="ECO:0000266"/>
    <property type="project" value="RGD"/>
</dbReference>
<dbReference type="GO" id="GO:1902857">
    <property type="term" value="P:positive regulation of non-motile cilium assembly"/>
    <property type="evidence" value="ECO:0000266"/>
    <property type="project" value="RGD"/>
</dbReference>
<dbReference type="GO" id="GO:0099173">
    <property type="term" value="P:postsynapse organization"/>
    <property type="evidence" value="ECO:0000314"/>
    <property type="project" value="SynGO"/>
</dbReference>
<dbReference type="GO" id="GO:0008104">
    <property type="term" value="P:protein localization"/>
    <property type="evidence" value="ECO:0000318"/>
    <property type="project" value="GO_Central"/>
</dbReference>
<dbReference type="GO" id="GO:0031270">
    <property type="term" value="P:pseudopodium retraction"/>
    <property type="evidence" value="ECO:0000266"/>
    <property type="project" value="RGD"/>
</dbReference>
<dbReference type="GO" id="GO:0016476">
    <property type="term" value="P:regulation of embryonic cell shape"/>
    <property type="evidence" value="ECO:0000250"/>
    <property type="project" value="UniProtKB"/>
</dbReference>
<dbReference type="GO" id="GO:0007283">
    <property type="term" value="P:spermatogenesis"/>
    <property type="evidence" value="ECO:0007669"/>
    <property type="project" value="UniProtKB-KW"/>
</dbReference>
<dbReference type="GO" id="GO:0016192">
    <property type="term" value="P:vesicle-mediated transport"/>
    <property type="evidence" value="ECO:0000266"/>
    <property type="project" value="RGD"/>
</dbReference>
<dbReference type="CDD" id="cd01850">
    <property type="entry name" value="CDC_Septin"/>
    <property type="match status" value="1"/>
</dbReference>
<dbReference type="FunFam" id="3.40.50.300:FF:000162">
    <property type="entry name" value="septin-7 isoform X1"/>
    <property type="match status" value="1"/>
</dbReference>
<dbReference type="Gene3D" id="3.40.50.300">
    <property type="entry name" value="P-loop containing nucleotide triphosphate hydrolases"/>
    <property type="match status" value="1"/>
</dbReference>
<dbReference type="InterPro" id="IPR030379">
    <property type="entry name" value="G_SEPTIN_dom"/>
</dbReference>
<dbReference type="InterPro" id="IPR027417">
    <property type="entry name" value="P-loop_NTPase"/>
</dbReference>
<dbReference type="InterPro" id="IPR016491">
    <property type="entry name" value="Septin"/>
</dbReference>
<dbReference type="InterPro" id="IPR008115">
    <property type="entry name" value="Septin7"/>
</dbReference>
<dbReference type="PANTHER" id="PTHR18884">
    <property type="entry name" value="SEPTIN"/>
    <property type="match status" value="1"/>
</dbReference>
<dbReference type="Pfam" id="PF00735">
    <property type="entry name" value="Septin"/>
    <property type="match status" value="1"/>
</dbReference>
<dbReference type="PIRSF" id="PIRSF006698">
    <property type="entry name" value="Septin"/>
    <property type="match status" value="1"/>
</dbReference>
<dbReference type="PRINTS" id="PR01742">
    <property type="entry name" value="SEPTIN7"/>
</dbReference>
<dbReference type="SUPFAM" id="SSF52540">
    <property type="entry name" value="P-loop containing nucleoside triphosphate hydrolases"/>
    <property type="match status" value="1"/>
</dbReference>
<dbReference type="PROSITE" id="PS51719">
    <property type="entry name" value="G_SEPTIN"/>
    <property type="match status" value="1"/>
</dbReference>
<proteinExistence type="evidence at protein level"/>
<sequence length="436" mass="50508">MSVSARSAAAEERSVNCSTMAQPKNLEGYVGFANLPNQVYRKSVKRGFEFTLMVVGESGLGKSTLINSLFLTDLYSPEYPGPSHRIKKTVQVEQSKVLIKEGGVQLLLTIVDTPGFGDAVDNSNCWQPVIDYIDSKFEDYLNAESRVNRRQMPDNRVQCCLYFIAPSGHGLKPLDIEFMKRLHEKVNIIPLIAKADTLTPEECQQFKKQIMKEIQGHKIKIYEFPETDDEEENKLVKKIKDRLPLAVVGSNTIIEVNGKRVRGRQYPWGVAEVENGEHCDFTILRNMLIRTHMQDLKDVTNNVHYENYRSRKLAAVTYNGVDNNKNKGQLTKSPLAQMEEERREHVAKMKKMEMEMEQVFEMKVKEKVQKLKDSEAELQRRHEQMKKNLEAQHKELEEKRRQFEEEKANWEAQQRILEQQNSSRTLEKNKKKGKIF</sequence>
<organism>
    <name type="scientific">Rattus norvegicus</name>
    <name type="common">Rat</name>
    <dbReference type="NCBI Taxonomy" id="10116"/>
    <lineage>
        <taxon>Eukaryota</taxon>
        <taxon>Metazoa</taxon>
        <taxon>Chordata</taxon>
        <taxon>Craniata</taxon>
        <taxon>Vertebrata</taxon>
        <taxon>Euteleostomi</taxon>
        <taxon>Mammalia</taxon>
        <taxon>Eutheria</taxon>
        <taxon>Euarchontoglires</taxon>
        <taxon>Glires</taxon>
        <taxon>Rodentia</taxon>
        <taxon>Myomorpha</taxon>
        <taxon>Muroidea</taxon>
        <taxon>Muridae</taxon>
        <taxon>Murinae</taxon>
        <taxon>Rattus</taxon>
    </lineage>
</organism>
<accession>Q9WVC0</accession>
<protein>
    <recommendedName>
        <fullName>Septin-7</fullName>
    </recommendedName>
    <alternativeName>
        <fullName>CDC10 protein homolog</fullName>
    </alternativeName>
</protein>
<gene>
    <name evidence="3" type="primary">Septin7</name>
    <name type="synonym">Cdc10</name>
    <name evidence="8" type="synonym">Sept7</name>
</gene>
<feature type="initiator methionine" description="Removed" evidence="3">
    <location>
        <position position="1"/>
    </location>
</feature>
<feature type="chain" id="PRO_0000173532" description="Septin-7">
    <location>
        <begin position="2"/>
        <end position="436"/>
    </location>
</feature>
<feature type="domain" description="Septin-type G" evidence="5">
    <location>
        <begin position="46"/>
        <end position="315"/>
    </location>
</feature>
<feature type="region of interest" description="Interaction with SEPTIN12" evidence="3">
    <location>
        <begin position="46"/>
        <end position="316"/>
    </location>
</feature>
<feature type="region of interest" description="G1 motif" evidence="5">
    <location>
        <begin position="56"/>
        <end position="63"/>
    </location>
</feature>
<feature type="region of interest" description="G3 motif" evidence="5">
    <location>
        <begin position="112"/>
        <end position="115"/>
    </location>
</feature>
<feature type="region of interest" description="G4 motif" evidence="5">
    <location>
        <begin position="193"/>
        <end position="196"/>
    </location>
</feature>
<feature type="region of interest" description="Disordered" evidence="6">
    <location>
        <begin position="377"/>
        <end position="436"/>
    </location>
</feature>
<feature type="coiled-coil region" evidence="4">
    <location>
        <begin position="331"/>
        <end position="436"/>
    </location>
</feature>
<feature type="compositionally biased region" description="Basic and acidic residues" evidence="6">
    <location>
        <begin position="377"/>
        <end position="409"/>
    </location>
</feature>
<feature type="binding site" evidence="1">
    <location>
        <begin position="56"/>
        <end position="63"/>
    </location>
    <ligand>
        <name>GTP</name>
        <dbReference type="ChEBI" id="CHEBI:37565"/>
    </ligand>
</feature>
<feature type="binding site" evidence="1">
    <location>
        <position position="89"/>
    </location>
    <ligand>
        <name>GTP</name>
        <dbReference type="ChEBI" id="CHEBI:37565"/>
    </ligand>
</feature>
<feature type="binding site" evidence="1">
    <location>
        <position position="115"/>
    </location>
    <ligand>
        <name>GTP</name>
        <dbReference type="ChEBI" id="CHEBI:37565"/>
    </ligand>
</feature>
<feature type="binding site" evidence="1">
    <location>
        <begin position="194"/>
        <end position="202"/>
    </location>
    <ligand>
        <name>GTP</name>
        <dbReference type="ChEBI" id="CHEBI:37565"/>
    </ligand>
</feature>
<feature type="binding site" evidence="1">
    <location>
        <position position="249"/>
    </location>
    <ligand>
        <name>GTP</name>
        <dbReference type="ChEBI" id="CHEBI:37565"/>
    </ligand>
</feature>
<feature type="binding site" evidence="1">
    <location>
        <position position="264"/>
    </location>
    <ligand>
        <name>GTP</name>
        <dbReference type="ChEBI" id="CHEBI:37565"/>
    </ligand>
</feature>
<feature type="modified residue" description="N-acetylserine" evidence="3">
    <location>
        <position position="2"/>
    </location>
</feature>
<feature type="modified residue" description="Phosphotyrosine" evidence="2">
    <location>
        <position position="29"/>
    </location>
</feature>
<feature type="modified residue" description="Phosphoserine" evidence="9">
    <location>
        <position position="76"/>
    </location>
</feature>
<feature type="modified residue" description="Phosphothreonine" evidence="9">
    <location>
        <position position="227"/>
    </location>
</feature>
<feature type="modified residue" description="Phosphoserine" evidence="9">
    <location>
        <position position="333"/>
    </location>
</feature>
<feature type="modified residue" description="N6-acetyllysine" evidence="2">
    <location>
        <position position="372"/>
    </location>
</feature>
<feature type="modified residue" description="Phosphoserine" evidence="3">
    <location>
        <position position="423"/>
    </location>
</feature>
<feature type="modified residue" description="Phosphothreonine" evidence="3">
    <location>
        <position position="425"/>
    </location>
</feature>